<evidence type="ECO:0000250" key="1"/>
<evidence type="ECO:0000305" key="2"/>
<gene>
    <name type="primary">trpB1</name>
    <name type="synonym">trpB-1</name>
    <name type="ordered locus">CCA_00559</name>
</gene>
<protein>
    <recommendedName>
        <fullName>Tryptophan synthase beta chain 1</fullName>
        <ecNumber>4.2.1.20</ecNumber>
    </recommendedName>
</protein>
<keyword id="KW-0028">Amino-acid biosynthesis</keyword>
<keyword id="KW-0057">Aromatic amino acid biosynthesis</keyword>
<keyword id="KW-0456">Lyase</keyword>
<keyword id="KW-0663">Pyridoxal phosphate</keyword>
<keyword id="KW-0822">Tryptophan biosynthesis</keyword>
<comment type="function">
    <text evidence="1">The beta subunit is responsible for the synthesis of L-tryptophan from indole and L-serine.</text>
</comment>
<comment type="catalytic activity">
    <reaction>
        <text>(1S,2R)-1-C-(indol-3-yl)glycerol 3-phosphate + L-serine = D-glyceraldehyde 3-phosphate + L-tryptophan + H2O</text>
        <dbReference type="Rhea" id="RHEA:10532"/>
        <dbReference type="ChEBI" id="CHEBI:15377"/>
        <dbReference type="ChEBI" id="CHEBI:33384"/>
        <dbReference type="ChEBI" id="CHEBI:57912"/>
        <dbReference type="ChEBI" id="CHEBI:58866"/>
        <dbReference type="ChEBI" id="CHEBI:59776"/>
        <dbReference type="EC" id="4.2.1.20"/>
    </reaction>
</comment>
<comment type="cofactor">
    <cofactor evidence="1">
        <name>pyridoxal 5'-phosphate</name>
        <dbReference type="ChEBI" id="CHEBI:597326"/>
    </cofactor>
</comment>
<comment type="pathway">
    <text>Amino-acid biosynthesis; L-tryptophan biosynthesis; L-tryptophan from chorismate: step 5/5.</text>
</comment>
<comment type="subunit">
    <text evidence="1">Tetramer of two alpha and two beta chains.</text>
</comment>
<comment type="similarity">
    <text evidence="2">Belongs to the TrpB family.</text>
</comment>
<reference key="1">
    <citation type="journal article" date="2003" name="Nucleic Acids Res.">
        <title>Genome sequence of Chlamydophila caviae (Chlamydia psittaci GPIC): examining the role of niche-specific genes in the evolution of the Chlamydiaceae.</title>
        <authorList>
            <person name="Read T.D."/>
            <person name="Myers G.S.A."/>
            <person name="Brunham R.C."/>
            <person name="Nelson W.C."/>
            <person name="Paulsen I.T."/>
            <person name="Heidelberg J.F."/>
            <person name="Holtzapple E.K."/>
            <person name="Khouri H.M."/>
            <person name="Federova N.B."/>
            <person name="Carty H.A."/>
            <person name="Umayam L.A."/>
            <person name="Haft D.H."/>
            <person name="Peterson J.D."/>
            <person name="Beanan M.J."/>
            <person name="White O."/>
            <person name="Salzberg S.L."/>
            <person name="Hsia R.-C."/>
            <person name="McClarty G."/>
            <person name="Rank R.G."/>
            <person name="Bavoil P.M."/>
            <person name="Fraser C.M."/>
        </authorList>
    </citation>
    <scope>NUCLEOTIDE SEQUENCE [LARGE SCALE GENOMIC DNA]</scope>
    <source>
        <strain>ATCC VR-813 / DSM 19441 / 03DC25 / GPIC</strain>
    </source>
</reference>
<accession>Q822W9</accession>
<feature type="chain" id="PRO_0000098938" description="Tryptophan synthase beta chain 1">
    <location>
        <begin position="1"/>
        <end position="412"/>
    </location>
</feature>
<feature type="modified residue" description="N6-(pyridoxal phosphate)lysine" evidence="1">
    <location>
        <position position="103"/>
    </location>
</feature>
<sequence>MYTCDTCEEDLDLSLDLGETYEELETYGGQYVPLELVKPLEDLDRSYEQLKKDPQFRETFHHILKNYAGRPTPLTEVKNFSRAINGPRIFLKREDLLHTGAHKINNVLGQCLIAKFQGKTRVVAETGAGQHGVALAAAAAYLGMECVIFMGETDINRQKPNVDRIRVLGAEVVSVKRGNSGLKEAVDAAIEDFIFKHDHTHFCIGSALGPYPYPKIVRDFQSVISLEVKSQIKEYTDRDPDILIACVGGGSNAIGFFHHFIPNTKVKLVGVEGGGLGVESGKHAARFATGKPGVVHGFHSYVLQDEDGNCADTYSISAGLDYVSVGPTHAEMHESGRAQYTYATDDEALEAFRLLSKTEGIIPALESSHALAHMIKIAPSLDKDTIAIVNLSGRGDKDLSQIIDLDKRKKHS</sequence>
<proteinExistence type="inferred from homology"/>
<name>TRPB1_CHLCV</name>
<organism>
    <name type="scientific">Chlamydia caviae (strain ATCC VR-813 / DSM 19441 / 03DC25 / GPIC)</name>
    <name type="common">Chlamydophila caviae</name>
    <dbReference type="NCBI Taxonomy" id="227941"/>
    <lineage>
        <taxon>Bacteria</taxon>
        <taxon>Pseudomonadati</taxon>
        <taxon>Chlamydiota</taxon>
        <taxon>Chlamydiia</taxon>
        <taxon>Chlamydiales</taxon>
        <taxon>Chlamydiaceae</taxon>
        <taxon>Chlamydia/Chlamydophila group</taxon>
        <taxon>Chlamydia</taxon>
    </lineage>
</organism>
<dbReference type="EC" id="4.2.1.20"/>
<dbReference type="EMBL" id="AE015925">
    <property type="protein sequence ID" value="AAP05302.1"/>
    <property type="molecule type" value="Genomic_DNA"/>
</dbReference>
<dbReference type="RefSeq" id="WP_011006517.1">
    <property type="nucleotide sequence ID" value="NC_003361.3"/>
</dbReference>
<dbReference type="SMR" id="Q822W9"/>
<dbReference type="STRING" id="227941.CCA_00559"/>
<dbReference type="KEGG" id="cca:CCA_00559"/>
<dbReference type="eggNOG" id="COG0133">
    <property type="taxonomic scope" value="Bacteria"/>
</dbReference>
<dbReference type="HOGENOM" id="CLU_016734_3_1_0"/>
<dbReference type="OrthoDB" id="9766131at2"/>
<dbReference type="UniPathway" id="UPA00035">
    <property type="reaction ID" value="UER00044"/>
</dbReference>
<dbReference type="Proteomes" id="UP000002193">
    <property type="component" value="Chromosome"/>
</dbReference>
<dbReference type="GO" id="GO:0005737">
    <property type="term" value="C:cytoplasm"/>
    <property type="evidence" value="ECO:0007669"/>
    <property type="project" value="TreeGrafter"/>
</dbReference>
<dbReference type="GO" id="GO:0004834">
    <property type="term" value="F:tryptophan synthase activity"/>
    <property type="evidence" value="ECO:0007669"/>
    <property type="project" value="UniProtKB-UniRule"/>
</dbReference>
<dbReference type="CDD" id="cd06446">
    <property type="entry name" value="Trp-synth_B"/>
    <property type="match status" value="1"/>
</dbReference>
<dbReference type="FunFam" id="3.40.50.1100:FF:000004">
    <property type="entry name" value="Tryptophan synthase beta chain"/>
    <property type="match status" value="1"/>
</dbReference>
<dbReference type="Gene3D" id="3.40.50.1100">
    <property type="match status" value="2"/>
</dbReference>
<dbReference type="HAMAP" id="MF_00133">
    <property type="entry name" value="Trp_synth_beta"/>
    <property type="match status" value="1"/>
</dbReference>
<dbReference type="InterPro" id="IPR006653">
    <property type="entry name" value="Trp_synth_b_CS"/>
</dbReference>
<dbReference type="InterPro" id="IPR006654">
    <property type="entry name" value="Trp_synth_beta"/>
</dbReference>
<dbReference type="InterPro" id="IPR023026">
    <property type="entry name" value="Trp_synth_beta/beta-like"/>
</dbReference>
<dbReference type="InterPro" id="IPR001926">
    <property type="entry name" value="TrpB-like_PALP"/>
</dbReference>
<dbReference type="InterPro" id="IPR036052">
    <property type="entry name" value="TrpB-like_PALP_sf"/>
</dbReference>
<dbReference type="NCBIfam" id="TIGR00263">
    <property type="entry name" value="trpB"/>
    <property type="match status" value="1"/>
</dbReference>
<dbReference type="PANTHER" id="PTHR48077:SF3">
    <property type="entry name" value="TRYPTOPHAN SYNTHASE"/>
    <property type="match status" value="1"/>
</dbReference>
<dbReference type="PANTHER" id="PTHR48077">
    <property type="entry name" value="TRYPTOPHAN SYNTHASE-RELATED"/>
    <property type="match status" value="1"/>
</dbReference>
<dbReference type="Pfam" id="PF00291">
    <property type="entry name" value="PALP"/>
    <property type="match status" value="1"/>
</dbReference>
<dbReference type="PIRSF" id="PIRSF001413">
    <property type="entry name" value="Trp_syn_beta"/>
    <property type="match status" value="1"/>
</dbReference>
<dbReference type="SUPFAM" id="SSF53686">
    <property type="entry name" value="Tryptophan synthase beta subunit-like PLP-dependent enzymes"/>
    <property type="match status" value="1"/>
</dbReference>
<dbReference type="PROSITE" id="PS00168">
    <property type="entry name" value="TRP_SYNTHASE_BETA"/>
    <property type="match status" value="1"/>
</dbReference>